<gene>
    <name evidence="1" type="primary">rplM</name>
    <name type="ordered locus">SbBS512_E3545</name>
</gene>
<comment type="function">
    <text evidence="1">This protein is one of the early assembly proteins of the 50S ribosomal subunit, although it is not seen to bind rRNA by itself. It is important during the early stages of 50S assembly.</text>
</comment>
<comment type="subunit">
    <text evidence="1">Part of the 50S ribosomal subunit.</text>
</comment>
<comment type="similarity">
    <text evidence="1">Belongs to the universal ribosomal protein uL13 family.</text>
</comment>
<dbReference type="EMBL" id="CP001063">
    <property type="protein sequence ID" value="ACD09978.1"/>
    <property type="molecule type" value="Genomic_DNA"/>
</dbReference>
<dbReference type="RefSeq" id="WP_004986574.1">
    <property type="nucleotide sequence ID" value="NC_010658.1"/>
</dbReference>
<dbReference type="SMR" id="B2U1V4"/>
<dbReference type="STRING" id="344609.SbBS512_E3545"/>
<dbReference type="KEGG" id="sbc:SbBS512_E3545"/>
<dbReference type="HOGENOM" id="CLU_082184_2_2_6"/>
<dbReference type="Proteomes" id="UP000001030">
    <property type="component" value="Chromosome"/>
</dbReference>
<dbReference type="GO" id="GO:0022625">
    <property type="term" value="C:cytosolic large ribosomal subunit"/>
    <property type="evidence" value="ECO:0007669"/>
    <property type="project" value="TreeGrafter"/>
</dbReference>
<dbReference type="GO" id="GO:0003729">
    <property type="term" value="F:mRNA binding"/>
    <property type="evidence" value="ECO:0007669"/>
    <property type="project" value="TreeGrafter"/>
</dbReference>
<dbReference type="GO" id="GO:0003735">
    <property type="term" value="F:structural constituent of ribosome"/>
    <property type="evidence" value="ECO:0007669"/>
    <property type="project" value="InterPro"/>
</dbReference>
<dbReference type="GO" id="GO:0017148">
    <property type="term" value="P:negative regulation of translation"/>
    <property type="evidence" value="ECO:0007669"/>
    <property type="project" value="TreeGrafter"/>
</dbReference>
<dbReference type="GO" id="GO:0006412">
    <property type="term" value="P:translation"/>
    <property type="evidence" value="ECO:0007669"/>
    <property type="project" value="UniProtKB-UniRule"/>
</dbReference>
<dbReference type="CDD" id="cd00392">
    <property type="entry name" value="Ribosomal_L13"/>
    <property type="match status" value="1"/>
</dbReference>
<dbReference type="FunFam" id="3.90.1180.10:FF:000001">
    <property type="entry name" value="50S ribosomal protein L13"/>
    <property type="match status" value="1"/>
</dbReference>
<dbReference type="Gene3D" id="3.90.1180.10">
    <property type="entry name" value="Ribosomal protein L13"/>
    <property type="match status" value="1"/>
</dbReference>
<dbReference type="HAMAP" id="MF_01366">
    <property type="entry name" value="Ribosomal_uL13"/>
    <property type="match status" value="1"/>
</dbReference>
<dbReference type="InterPro" id="IPR005822">
    <property type="entry name" value="Ribosomal_uL13"/>
</dbReference>
<dbReference type="InterPro" id="IPR005823">
    <property type="entry name" value="Ribosomal_uL13_bac-type"/>
</dbReference>
<dbReference type="InterPro" id="IPR023563">
    <property type="entry name" value="Ribosomal_uL13_CS"/>
</dbReference>
<dbReference type="InterPro" id="IPR036899">
    <property type="entry name" value="Ribosomal_uL13_sf"/>
</dbReference>
<dbReference type="NCBIfam" id="TIGR01066">
    <property type="entry name" value="rplM_bact"/>
    <property type="match status" value="1"/>
</dbReference>
<dbReference type="PANTHER" id="PTHR11545:SF2">
    <property type="entry name" value="LARGE RIBOSOMAL SUBUNIT PROTEIN UL13M"/>
    <property type="match status" value="1"/>
</dbReference>
<dbReference type="PANTHER" id="PTHR11545">
    <property type="entry name" value="RIBOSOMAL PROTEIN L13"/>
    <property type="match status" value="1"/>
</dbReference>
<dbReference type="Pfam" id="PF00572">
    <property type="entry name" value="Ribosomal_L13"/>
    <property type="match status" value="1"/>
</dbReference>
<dbReference type="PIRSF" id="PIRSF002181">
    <property type="entry name" value="Ribosomal_L13"/>
    <property type="match status" value="1"/>
</dbReference>
<dbReference type="SUPFAM" id="SSF52161">
    <property type="entry name" value="Ribosomal protein L13"/>
    <property type="match status" value="1"/>
</dbReference>
<dbReference type="PROSITE" id="PS00783">
    <property type="entry name" value="RIBOSOMAL_L13"/>
    <property type="match status" value="1"/>
</dbReference>
<organism>
    <name type="scientific">Shigella boydii serotype 18 (strain CDC 3083-94 / BS512)</name>
    <dbReference type="NCBI Taxonomy" id="344609"/>
    <lineage>
        <taxon>Bacteria</taxon>
        <taxon>Pseudomonadati</taxon>
        <taxon>Pseudomonadota</taxon>
        <taxon>Gammaproteobacteria</taxon>
        <taxon>Enterobacterales</taxon>
        <taxon>Enterobacteriaceae</taxon>
        <taxon>Shigella</taxon>
    </lineage>
</organism>
<keyword id="KW-1185">Reference proteome</keyword>
<keyword id="KW-0687">Ribonucleoprotein</keyword>
<keyword id="KW-0689">Ribosomal protein</keyword>
<protein>
    <recommendedName>
        <fullName evidence="1">Large ribosomal subunit protein uL13</fullName>
    </recommendedName>
    <alternativeName>
        <fullName evidence="2">50S ribosomal protein L13</fullName>
    </alternativeName>
</protein>
<reference key="1">
    <citation type="submission" date="2008-05" db="EMBL/GenBank/DDBJ databases">
        <title>Complete sequence of Shigella boydii serotype 18 strain BS512.</title>
        <authorList>
            <person name="Rasko D.A."/>
            <person name="Rosovitz M."/>
            <person name="Maurelli A.T."/>
            <person name="Myers G."/>
            <person name="Seshadri R."/>
            <person name="Cer R."/>
            <person name="Jiang L."/>
            <person name="Ravel J."/>
            <person name="Sebastian Y."/>
        </authorList>
    </citation>
    <scope>NUCLEOTIDE SEQUENCE [LARGE SCALE GENOMIC DNA]</scope>
    <source>
        <strain>CDC 3083-94 / BS512</strain>
    </source>
</reference>
<feature type="chain" id="PRO_1000144181" description="Large ribosomal subunit protein uL13">
    <location>
        <begin position="1"/>
        <end position="142"/>
    </location>
</feature>
<name>RL13_SHIB3</name>
<accession>B2U1V4</accession>
<evidence type="ECO:0000255" key="1">
    <source>
        <dbReference type="HAMAP-Rule" id="MF_01366"/>
    </source>
</evidence>
<evidence type="ECO:0000305" key="2"/>
<sequence length="142" mass="15965">MKTFTAKPETVKRDWYVVDATGKTLGRLATELARRLRGKHKAEYTPHVDTGDYIIVLNADKVAVTGNKCTDKVYYHHTGHIGGIKQATFEEMIARRPERVIEIAVKGMLPKGPLGRAMFRKLKVYAGNEHNHAAQQPQVLDI</sequence>
<proteinExistence type="inferred from homology"/>